<dbReference type="EMBL" id="CP000724">
    <property type="protein sequence ID" value="ABR50545.1"/>
    <property type="molecule type" value="Genomic_DNA"/>
</dbReference>
<dbReference type="RefSeq" id="WP_012065436.1">
    <property type="nucleotide sequence ID" value="NC_009633.1"/>
</dbReference>
<dbReference type="SMR" id="A6TWH7"/>
<dbReference type="STRING" id="293826.Amet_4473"/>
<dbReference type="KEGG" id="amt:Amet_4473"/>
<dbReference type="eggNOG" id="COG0091">
    <property type="taxonomic scope" value="Bacteria"/>
</dbReference>
<dbReference type="HOGENOM" id="CLU_083987_3_3_9"/>
<dbReference type="OrthoDB" id="9805969at2"/>
<dbReference type="Proteomes" id="UP000001572">
    <property type="component" value="Chromosome"/>
</dbReference>
<dbReference type="GO" id="GO:0022625">
    <property type="term" value="C:cytosolic large ribosomal subunit"/>
    <property type="evidence" value="ECO:0007669"/>
    <property type="project" value="TreeGrafter"/>
</dbReference>
<dbReference type="GO" id="GO:0019843">
    <property type="term" value="F:rRNA binding"/>
    <property type="evidence" value="ECO:0007669"/>
    <property type="project" value="UniProtKB-UniRule"/>
</dbReference>
<dbReference type="GO" id="GO:0003735">
    <property type="term" value="F:structural constituent of ribosome"/>
    <property type="evidence" value="ECO:0007669"/>
    <property type="project" value="InterPro"/>
</dbReference>
<dbReference type="GO" id="GO:0006412">
    <property type="term" value="P:translation"/>
    <property type="evidence" value="ECO:0007669"/>
    <property type="project" value="UniProtKB-UniRule"/>
</dbReference>
<dbReference type="CDD" id="cd00336">
    <property type="entry name" value="Ribosomal_L22"/>
    <property type="match status" value="1"/>
</dbReference>
<dbReference type="FunFam" id="3.90.470.10:FF:000011">
    <property type="entry name" value="50S ribosomal protein L22"/>
    <property type="match status" value="1"/>
</dbReference>
<dbReference type="Gene3D" id="3.90.470.10">
    <property type="entry name" value="Ribosomal protein L22/L17"/>
    <property type="match status" value="1"/>
</dbReference>
<dbReference type="HAMAP" id="MF_01331_B">
    <property type="entry name" value="Ribosomal_uL22_B"/>
    <property type="match status" value="1"/>
</dbReference>
<dbReference type="InterPro" id="IPR001063">
    <property type="entry name" value="Ribosomal_uL22"/>
</dbReference>
<dbReference type="InterPro" id="IPR005727">
    <property type="entry name" value="Ribosomal_uL22_bac/chlpt-type"/>
</dbReference>
<dbReference type="InterPro" id="IPR047867">
    <property type="entry name" value="Ribosomal_uL22_bac/org-type"/>
</dbReference>
<dbReference type="InterPro" id="IPR018260">
    <property type="entry name" value="Ribosomal_uL22_CS"/>
</dbReference>
<dbReference type="InterPro" id="IPR036394">
    <property type="entry name" value="Ribosomal_uL22_sf"/>
</dbReference>
<dbReference type="NCBIfam" id="TIGR01044">
    <property type="entry name" value="rplV_bact"/>
    <property type="match status" value="1"/>
</dbReference>
<dbReference type="PANTHER" id="PTHR13501">
    <property type="entry name" value="CHLOROPLAST 50S RIBOSOMAL PROTEIN L22-RELATED"/>
    <property type="match status" value="1"/>
</dbReference>
<dbReference type="PANTHER" id="PTHR13501:SF8">
    <property type="entry name" value="LARGE RIBOSOMAL SUBUNIT PROTEIN UL22M"/>
    <property type="match status" value="1"/>
</dbReference>
<dbReference type="Pfam" id="PF00237">
    <property type="entry name" value="Ribosomal_L22"/>
    <property type="match status" value="1"/>
</dbReference>
<dbReference type="SUPFAM" id="SSF54843">
    <property type="entry name" value="Ribosomal protein L22"/>
    <property type="match status" value="1"/>
</dbReference>
<dbReference type="PROSITE" id="PS00464">
    <property type="entry name" value="RIBOSOMAL_L22"/>
    <property type="match status" value="1"/>
</dbReference>
<gene>
    <name evidence="1" type="primary">rplV</name>
    <name type="ordered locus">Amet_4473</name>
</gene>
<sequence length="110" mass="12327">MEARAIAKFVRIAPRKVKIVVDLVRGKQVDEALAILKHTPKGASPVVIKLIQSAVANAENNHEMDREQLFVSEVYANQGPTMKRFRPRAMGRATTIRKRTSHIGIVVKEK</sequence>
<proteinExistence type="inferred from homology"/>
<protein>
    <recommendedName>
        <fullName evidence="1">Large ribosomal subunit protein uL22</fullName>
    </recommendedName>
    <alternativeName>
        <fullName evidence="2">50S ribosomal protein L22</fullName>
    </alternativeName>
</protein>
<comment type="function">
    <text evidence="1">This protein binds specifically to 23S rRNA; its binding is stimulated by other ribosomal proteins, e.g. L4, L17, and L20. It is important during the early stages of 50S assembly. It makes multiple contacts with different domains of the 23S rRNA in the assembled 50S subunit and ribosome (By similarity).</text>
</comment>
<comment type="function">
    <text evidence="1">The globular domain of the protein is located near the polypeptide exit tunnel on the outside of the subunit, while an extended beta-hairpin is found that lines the wall of the exit tunnel in the center of the 70S ribosome.</text>
</comment>
<comment type="subunit">
    <text evidence="1">Part of the 50S ribosomal subunit.</text>
</comment>
<comment type="similarity">
    <text evidence="1">Belongs to the universal ribosomal protein uL22 family.</text>
</comment>
<reference key="1">
    <citation type="journal article" date="2016" name="Genome Announc.">
        <title>Complete genome sequence of Alkaliphilus metalliredigens strain QYMF, an alkaliphilic and metal-reducing bacterium isolated from borax-contaminated leachate ponds.</title>
        <authorList>
            <person name="Hwang C."/>
            <person name="Copeland A."/>
            <person name="Lucas S."/>
            <person name="Lapidus A."/>
            <person name="Barry K."/>
            <person name="Detter J.C."/>
            <person name="Glavina Del Rio T."/>
            <person name="Hammon N."/>
            <person name="Israni S."/>
            <person name="Dalin E."/>
            <person name="Tice H."/>
            <person name="Pitluck S."/>
            <person name="Chertkov O."/>
            <person name="Brettin T."/>
            <person name="Bruce D."/>
            <person name="Han C."/>
            <person name="Schmutz J."/>
            <person name="Larimer F."/>
            <person name="Land M.L."/>
            <person name="Hauser L."/>
            <person name="Kyrpides N."/>
            <person name="Mikhailova N."/>
            <person name="Ye Q."/>
            <person name="Zhou J."/>
            <person name="Richardson P."/>
            <person name="Fields M.W."/>
        </authorList>
    </citation>
    <scope>NUCLEOTIDE SEQUENCE [LARGE SCALE GENOMIC DNA]</scope>
    <source>
        <strain>QYMF</strain>
    </source>
</reference>
<evidence type="ECO:0000255" key="1">
    <source>
        <dbReference type="HAMAP-Rule" id="MF_01331"/>
    </source>
</evidence>
<evidence type="ECO:0000305" key="2"/>
<feature type="chain" id="PRO_1000067602" description="Large ribosomal subunit protein uL22">
    <location>
        <begin position="1"/>
        <end position="110"/>
    </location>
</feature>
<keyword id="KW-1185">Reference proteome</keyword>
<keyword id="KW-0687">Ribonucleoprotein</keyword>
<keyword id="KW-0689">Ribosomal protein</keyword>
<keyword id="KW-0694">RNA-binding</keyword>
<keyword id="KW-0699">rRNA-binding</keyword>
<accession>A6TWH7</accession>
<name>RL22_ALKMQ</name>
<organism>
    <name type="scientific">Alkaliphilus metalliredigens (strain QYMF)</name>
    <dbReference type="NCBI Taxonomy" id="293826"/>
    <lineage>
        <taxon>Bacteria</taxon>
        <taxon>Bacillati</taxon>
        <taxon>Bacillota</taxon>
        <taxon>Clostridia</taxon>
        <taxon>Peptostreptococcales</taxon>
        <taxon>Natronincolaceae</taxon>
        <taxon>Alkaliphilus</taxon>
    </lineage>
</organism>